<sequence length="553" mass="60897">MFCIQCEQTIQTPTTKGCSFAQGMCGKTAEVSDLQDILVYALQGVSFWAEQGRKVNVILDEIDQWAPKAFFATLTNVNFDPERVIEFALQAQDYKQQLEETVRAAATVTNTELDELSPAAKFELPTEADQIIALAPQAAVNRGHETQHEDVIGLRLLCLYGLKGAAAYMEHAHVLGQTDKDVFTEYHQIMAWLGTDPTDLGELLDCSMKIGLMNYRIMEMLDTGETNTFGHPEPSQVNVKTIKGKCILVSGHDLHDLEKILQQTEGKGINVYTNGEMLPAHSYPELKKYPHLVGNYGSAWQNQQKEFANFPGAIVMTSNCLLNPNVGQYADRLFTRSIVGWPGVAHIEGDDFTAVIDCALAQEGFKHNEIEQMITVGFGRNALMAAAPAVVEQVKEGNISHFFLVGGCDGDKSERSYYTDFTAQAPEDSVILTLACGKYRFNKNQFGDINGIPRLLDVGQCNDAYSAIQLALALAKEFDCGINELPLTLVLSWFEQKAIVILLTLFALGVKGIYTGPTAPAFLTDNLLAIIQEKFDMRSIGNVEDDLKAILAA</sequence>
<comment type="function">
    <text evidence="1">Catalyzes the reduction of hydroxylamine to form NH(3) and H(2)O.</text>
</comment>
<comment type="catalytic activity">
    <reaction evidence="1">
        <text>A + NH4(+) + H2O = hydroxylamine + AH2 + H(+)</text>
        <dbReference type="Rhea" id="RHEA:22052"/>
        <dbReference type="ChEBI" id="CHEBI:13193"/>
        <dbReference type="ChEBI" id="CHEBI:15377"/>
        <dbReference type="ChEBI" id="CHEBI:15378"/>
        <dbReference type="ChEBI" id="CHEBI:15429"/>
        <dbReference type="ChEBI" id="CHEBI:17499"/>
        <dbReference type="ChEBI" id="CHEBI:28938"/>
        <dbReference type="EC" id="1.7.99.1"/>
    </reaction>
</comment>
<comment type="cofactor">
    <cofactor evidence="1">
        <name>[2Fe-2S] cluster</name>
        <dbReference type="ChEBI" id="CHEBI:190135"/>
    </cofactor>
    <text evidence="1">Binds 1 [2Fe-2S] cluster.</text>
</comment>
<comment type="cofactor">
    <cofactor evidence="1">
        <name>hybrid [4Fe-2O-2S] cluster</name>
        <dbReference type="ChEBI" id="CHEBI:60519"/>
    </cofactor>
    <text evidence="1">Binds 1 hybrid [4Fe-2O-2S] cluster.</text>
</comment>
<comment type="subcellular location">
    <subcellularLocation>
        <location evidence="1">Cytoplasm</location>
    </subcellularLocation>
</comment>
<comment type="similarity">
    <text evidence="1">Belongs to the HCP family.</text>
</comment>
<keyword id="KW-0001">2Fe-2S</keyword>
<keyword id="KW-0963">Cytoplasm</keyword>
<keyword id="KW-0408">Iron</keyword>
<keyword id="KW-0411">Iron-sulfur</keyword>
<keyword id="KW-0479">Metal-binding</keyword>
<keyword id="KW-0560">Oxidoreductase</keyword>
<keyword id="KW-1185">Reference proteome</keyword>
<organism>
    <name type="scientific">Aliivibrio fischeri (strain ATCC 700601 / ES114)</name>
    <name type="common">Vibrio fischeri</name>
    <dbReference type="NCBI Taxonomy" id="312309"/>
    <lineage>
        <taxon>Bacteria</taxon>
        <taxon>Pseudomonadati</taxon>
        <taxon>Pseudomonadota</taxon>
        <taxon>Gammaproteobacteria</taxon>
        <taxon>Vibrionales</taxon>
        <taxon>Vibrionaceae</taxon>
        <taxon>Aliivibrio</taxon>
    </lineage>
</organism>
<evidence type="ECO:0000255" key="1">
    <source>
        <dbReference type="HAMAP-Rule" id="MF_00069"/>
    </source>
</evidence>
<proteinExistence type="inferred from homology"/>
<dbReference type="EC" id="1.7.99.1" evidence="1"/>
<dbReference type="EMBL" id="CP000021">
    <property type="protein sequence ID" value="AAW87933.1"/>
    <property type="molecule type" value="Genomic_DNA"/>
</dbReference>
<dbReference type="RefSeq" id="WP_011263680.1">
    <property type="nucleotide sequence ID" value="NC_006841.2"/>
</dbReference>
<dbReference type="RefSeq" id="YP_206821.1">
    <property type="nucleotide sequence ID" value="NC_006841.2"/>
</dbReference>
<dbReference type="SMR" id="Q5DZ63"/>
<dbReference type="STRING" id="312309.VF_A0863"/>
<dbReference type="EnsemblBacteria" id="AAW87933">
    <property type="protein sequence ID" value="AAW87933"/>
    <property type="gene ID" value="VF_A0863"/>
</dbReference>
<dbReference type="GeneID" id="54166180"/>
<dbReference type="KEGG" id="vfi:VF_A0863"/>
<dbReference type="PATRIC" id="fig|312309.11.peg.3463"/>
<dbReference type="eggNOG" id="COG1151">
    <property type="taxonomic scope" value="Bacteria"/>
</dbReference>
<dbReference type="HOGENOM" id="CLU_038344_2_0_6"/>
<dbReference type="OrthoDB" id="9761526at2"/>
<dbReference type="Proteomes" id="UP000000537">
    <property type="component" value="Chromosome II"/>
</dbReference>
<dbReference type="GO" id="GO:0005737">
    <property type="term" value="C:cytoplasm"/>
    <property type="evidence" value="ECO:0007669"/>
    <property type="project" value="UniProtKB-SubCell"/>
</dbReference>
<dbReference type="GO" id="GO:0051537">
    <property type="term" value="F:2 iron, 2 sulfur cluster binding"/>
    <property type="evidence" value="ECO:0007669"/>
    <property type="project" value="UniProtKB-KW"/>
</dbReference>
<dbReference type="GO" id="GO:0050418">
    <property type="term" value="F:hydroxylamine reductase activity"/>
    <property type="evidence" value="ECO:0007669"/>
    <property type="project" value="UniProtKB-UniRule"/>
</dbReference>
<dbReference type="GO" id="GO:0046872">
    <property type="term" value="F:metal ion binding"/>
    <property type="evidence" value="ECO:0007669"/>
    <property type="project" value="UniProtKB-KW"/>
</dbReference>
<dbReference type="GO" id="GO:0004601">
    <property type="term" value="F:peroxidase activity"/>
    <property type="evidence" value="ECO:0007669"/>
    <property type="project" value="TreeGrafter"/>
</dbReference>
<dbReference type="GO" id="GO:0042542">
    <property type="term" value="P:response to hydrogen peroxide"/>
    <property type="evidence" value="ECO:0007669"/>
    <property type="project" value="TreeGrafter"/>
</dbReference>
<dbReference type="CDD" id="cd01914">
    <property type="entry name" value="HCP"/>
    <property type="match status" value="1"/>
</dbReference>
<dbReference type="FunFam" id="1.20.1270.20:FF:000001">
    <property type="entry name" value="Hydroxylamine reductase"/>
    <property type="match status" value="1"/>
</dbReference>
<dbReference type="FunFam" id="1.20.1270.20:FF:000002">
    <property type="entry name" value="Hydroxylamine reductase"/>
    <property type="match status" value="1"/>
</dbReference>
<dbReference type="FunFam" id="3.40.50.2030:FF:000001">
    <property type="entry name" value="Hydroxylamine reductase"/>
    <property type="match status" value="1"/>
</dbReference>
<dbReference type="FunFam" id="3.40.50.2030:FF:000002">
    <property type="entry name" value="Hydroxylamine reductase"/>
    <property type="match status" value="1"/>
</dbReference>
<dbReference type="Gene3D" id="1.20.1270.20">
    <property type="match status" value="2"/>
</dbReference>
<dbReference type="Gene3D" id="3.40.50.2030">
    <property type="match status" value="2"/>
</dbReference>
<dbReference type="HAMAP" id="MF_00069">
    <property type="entry name" value="Hydroxylam_reduct"/>
    <property type="match status" value="1"/>
</dbReference>
<dbReference type="InterPro" id="IPR004137">
    <property type="entry name" value="HCP/CODH"/>
</dbReference>
<dbReference type="InterPro" id="IPR010048">
    <property type="entry name" value="Hydroxylam_reduct"/>
</dbReference>
<dbReference type="InterPro" id="IPR016099">
    <property type="entry name" value="Prismane-like_a/b-sand"/>
</dbReference>
<dbReference type="InterPro" id="IPR011254">
    <property type="entry name" value="Prismane-like_sf"/>
</dbReference>
<dbReference type="InterPro" id="IPR016100">
    <property type="entry name" value="Prismane_a-bundle"/>
</dbReference>
<dbReference type="NCBIfam" id="TIGR01703">
    <property type="entry name" value="hybrid_clust"/>
    <property type="match status" value="1"/>
</dbReference>
<dbReference type="NCBIfam" id="NF003658">
    <property type="entry name" value="PRK05290.1"/>
    <property type="match status" value="1"/>
</dbReference>
<dbReference type="PANTHER" id="PTHR30109">
    <property type="entry name" value="HYDROXYLAMINE REDUCTASE"/>
    <property type="match status" value="1"/>
</dbReference>
<dbReference type="PANTHER" id="PTHR30109:SF0">
    <property type="entry name" value="HYDROXYLAMINE REDUCTASE"/>
    <property type="match status" value="1"/>
</dbReference>
<dbReference type="Pfam" id="PF03063">
    <property type="entry name" value="Prismane"/>
    <property type="match status" value="1"/>
</dbReference>
<dbReference type="PIRSF" id="PIRSF000076">
    <property type="entry name" value="HCP"/>
    <property type="match status" value="1"/>
</dbReference>
<dbReference type="SUPFAM" id="SSF56821">
    <property type="entry name" value="Prismane protein-like"/>
    <property type="match status" value="1"/>
</dbReference>
<accession>Q5DZ63</accession>
<name>HCP_ALIF1</name>
<feature type="chain" id="PRO_1000009179" description="Hydroxylamine reductase">
    <location>
        <begin position="1"/>
        <end position="553"/>
    </location>
</feature>
<feature type="binding site" evidence="1">
    <location>
        <position position="3"/>
    </location>
    <ligand>
        <name>[2Fe-2S] cluster</name>
        <dbReference type="ChEBI" id="CHEBI:190135"/>
    </ligand>
</feature>
<feature type="binding site" evidence="1">
    <location>
        <position position="6"/>
    </location>
    <ligand>
        <name>[2Fe-2S] cluster</name>
        <dbReference type="ChEBI" id="CHEBI:190135"/>
    </ligand>
</feature>
<feature type="binding site" evidence="1">
    <location>
        <position position="18"/>
    </location>
    <ligand>
        <name>[2Fe-2S] cluster</name>
        <dbReference type="ChEBI" id="CHEBI:190135"/>
    </ligand>
</feature>
<feature type="binding site" evidence="1">
    <location>
        <position position="25"/>
    </location>
    <ligand>
        <name>[2Fe-2S] cluster</name>
        <dbReference type="ChEBI" id="CHEBI:190135"/>
    </ligand>
</feature>
<feature type="binding site" evidence="1">
    <location>
        <position position="252"/>
    </location>
    <ligand>
        <name>hybrid [4Fe-2O-2S] cluster</name>
        <dbReference type="ChEBI" id="CHEBI:60519"/>
    </ligand>
</feature>
<feature type="binding site" evidence="1">
    <location>
        <position position="276"/>
    </location>
    <ligand>
        <name>hybrid [4Fe-2O-2S] cluster</name>
        <dbReference type="ChEBI" id="CHEBI:60519"/>
    </ligand>
</feature>
<feature type="binding site" evidence="1">
    <location>
        <position position="320"/>
    </location>
    <ligand>
        <name>hybrid [4Fe-2O-2S] cluster</name>
        <dbReference type="ChEBI" id="CHEBI:60519"/>
    </ligand>
</feature>
<feature type="binding site" description="via persulfide group" evidence="1">
    <location>
        <position position="408"/>
    </location>
    <ligand>
        <name>hybrid [4Fe-2O-2S] cluster</name>
        <dbReference type="ChEBI" id="CHEBI:60519"/>
    </ligand>
</feature>
<feature type="binding site" evidence="1">
    <location>
        <position position="436"/>
    </location>
    <ligand>
        <name>hybrid [4Fe-2O-2S] cluster</name>
        <dbReference type="ChEBI" id="CHEBI:60519"/>
    </ligand>
</feature>
<feature type="binding site" evidence="1">
    <location>
        <position position="461"/>
    </location>
    <ligand>
        <name>hybrid [4Fe-2O-2S] cluster</name>
        <dbReference type="ChEBI" id="CHEBI:60519"/>
    </ligand>
</feature>
<feature type="binding site" evidence="1">
    <location>
        <position position="495"/>
    </location>
    <ligand>
        <name>hybrid [4Fe-2O-2S] cluster</name>
        <dbReference type="ChEBI" id="CHEBI:60519"/>
    </ligand>
</feature>
<feature type="binding site" evidence="1">
    <location>
        <position position="497"/>
    </location>
    <ligand>
        <name>hybrid [4Fe-2O-2S] cluster</name>
        <dbReference type="ChEBI" id="CHEBI:60519"/>
    </ligand>
</feature>
<feature type="modified residue" description="Cysteine persulfide" evidence="1">
    <location>
        <position position="408"/>
    </location>
</feature>
<reference key="1">
    <citation type="journal article" date="2005" name="Proc. Natl. Acad. Sci. U.S.A.">
        <title>Complete genome sequence of Vibrio fischeri: a symbiotic bacterium with pathogenic congeners.</title>
        <authorList>
            <person name="Ruby E.G."/>
            <person name="Urbanowski M."/>
            <person name="Campbell J."/>
            <person name="Dunn A."/>
            <person name="Faini M."/>
            <person name="Gunsalus R."/>
            <person name="Lostroh P."/>
            <person name="Lupp C."/>
            <person name="McCann J."/>
            <person name="Millikan D."/>
            <person name="Schaefer A."/>
            <person name="Stabb E."/>
            <person name="Stevens A."/>
            <person name="Visick K."/>
            <person name="Whistler C."/>
            <person name="Greenberg E.P."/>
        </authorList>
    </citation>
    <scope>NUCLEOTIDE SEQUENCE [LARGE SCALE GENOMIC DNA]</scope>
    <source>
        <strain>ATCC 700601 / ES114</strain>
    </source>
</reference>
<protein>
    <recommendedName>
        <fullName evidence="1">Hydroxylamine reductase</fullName>
        <ecNumber evidence="1">1.7.99.1</ecNumber>
    </recommendedName>
    <alternativeName>
        <fullName evidence="1">Hybrid-cluster protein</fullName>
        <shortName evidence="1">HCP</shortName>
    </alternativeName>
    <alternativeName>
        <fullName evidence="1">Prismane protein</fullName>
    </alternativeName>
</protein>
<gene>
    <name evidence="1" type="primary">hcp</name>
    <name type="ordered locus">VF_A0863</name>
</gene>